<sequence length="285" mass="30532">MKLCGFDIGLDQPFFLIAGPCVVESEQLQMDTAGTLKEITSSLGIPFIFKSSFDKANRSSGTSFRGPGREKGLEILAKVKRELGLPVLTDVHTEDDITEAAKVVDVLQTPAFLCRQTDFIRAVAQSGKPVNIKKGQFLAPHDMKNVIDKARAAAKEAGLPEDSFMACERGASFGYNNLVSDMRSLAIMRETGAPVVFDATHSVQLPGGQGTTSGGQREMVPVLSRAAVAVGVAGLFMETHPDPAKALSDGPNAVPLKHMKALLETLLALDQVTKKNAFLEDVFQS</sequence>
<gene>
    <name evidence="1" type="primary">kdsA</name>
    <name type="ordered locus">Vapar_3444</name>
</gene>
<proteinExistence type="inferred from homology"/>
<evidence type="ECO:0000255" key="1">
    <source>
        <dbReference type="HAMAP-Rule" id="MF_00056"/>
    </source>
</evidence>
<feature type="chain" id="PRO_1000202339" description="2-dehydro-3-deoxyphosphooctonate aldolase">
    <location>
        <begin position="1"/>
        <end position="285"/>
    </location>
</feature>
<accession>C5CSV4</accession>
<comment type="catalytic activity">
    <reaction evidence="1">
        <text>D-arabinose 5-phosphate + phosphoenolpyruvate + H2O = 3-deoxy-alpha-D-manno-2-octulosonate-8-phosphate + phosphate</text>
        <dbReference type="Rhea" id="RHEA:14053"/>
        <dbReference type="ChEBI" id="CHEBI:15377"/>
        <dbReference type="ChEBI" id="CHEBI:43474"/>
        <dbReference type="ChEBI" id="CHEBI:57693"/>
        <dbReference type="ChEBI" id="CHEBI:58702"/>
        <dbReference type="ChEBI" id="CHEBI:85985"/>
        <dbReference type="EC" id="2.5.1.55"/>
    </reaction>
</comment>
<comment type="pathway">
    <text evidence="1">Carbohydrate biosynthesis; 3-deoxy-D-manno-octulosonate biosynthesis; 3-deoxy-D-manno-octulosonate from D-ribulose 5-phosphate: step 2/3.</text>
</comment>
<comment type="pathway">
    <text evidence="1">Bacterial outer membrane biogenesis; lipopolysaccharide biosynthesis.</text>
</comment>
<comment type="subcellular location">
    <subcellularLocation>
        <location evidence="1">Cytoplasm</location>
    </subcellularLocation>
</comment>
<comment type="similarity">
    <text evidence="1">Belongs to the KdsA family.</text>
</comment>
<organism>
    <name type="scientific">Variovorax paradoxus (strain S110)</name>
    <dbReference type="NCBI Taxonomy" id="543728"/>
    <lineage>
        <taxon>Bacteria</taxon>
        <taxon>Pseudomonadati</taxon>
        <taxon>Pseudomonadota</taxon>
        <taxon>Betaproteobacteria</taxon>
        <taxon>Burkholderiales</taxon>
        <taxon>Comamonadaceae</taxon>
        <taxon>Variovorax</taxon>
    </lineage>
</organism>
<dbReference type="EC" id="2.5.1.55" evidence="1"/>
<dbReference type="EMBL" id="CP001635">
    <property type="protein sequence ID" value="ACS20061.1"/>
    <property type="molecule type" value="Genomic_DNA"/>
</dbReference>
<dbReference type="SMR" id="C5CSV4"/>
<dbReference type="STRING" id="543728.Vapar_3444"/>
<dbReference type="KEGG" id="vap:Vapar_3444"/>
<dbReference type="eggNOG" id="COG2877">
    <property type="taxonomic scope" value="Bacteria"/>
</dbReference>
<dbReference type="HOGENOM" id="CLU_036666_0_0_4"/>
<dbReference type="OrthoDB" id="9776934at2"/>
<dbReference type="UniPathway" id="UPA00030"/>
<dbReference type="UniPathway" id="UPA00357">
    <property type="reaction ID" value="UER00474"/>
</dbReference>
<dbReference type="GO" id="GO:0005737">
    <property type="term" value="C:cytoplasm"/>
    <property type="evidence" value="ECO:0007669"/>
    <property type="project" value="UniProtKB-SubCell"/>
</dbReference>
<dbReference type="GO" id="GO:0008676">
    <property type="term" value="F:3-deoxy-8-phosphooctulonate synthase activity"/>
    <property type="evidence" value="ECO:0007669"/>
    <property type="project" value="UniProtKB-UniRule"/>
</dbReference>
<dbReference type="GO" id="GO:0019294">
    <property type="term" value="P:keto-3-deoxy-D-manno-octulosonic acid biosynthetic process"/>
    <property type="evidence" value="ECO:0007669"/>
    <property type="project" value="UniProtKB-UniRule"/>
</dbReference>
<dbReference type="Gene3D" id="3.20.20.70">
    <property type="entry name" value="Aldolase class I"/>
    <property type="match status" value="1"/>
</dbReference>
<dbReference type="HAMAP" id="MF_00056">
    <property type="entry name" value="KDO8P_synth"/>
    <property type="match status" value="1"/>
</dbReference>
<dbReference type="InterPro" id="IPR013785">
    <property type="entry name" value="Aldolase_TIM"/>
</dbReference>
<dbReference type="InterPro" id="IPR006218">
    <property type="entry name" value="DAHP1/KDSA"/>
</dbReference>
<dbReference type="InterPro" id="IPR006269">
    <property type="entry name" value="KDO8P_synthase"/>
</dbReference>
<dbReference type="NCBIfam" id="TIGR01362">
    <property type="entry name" value="KDO8P_synth"/>
    <property type="match status" value="1"/>
</dbReference>
<dbReference type="NCBIfam" id="NF003543">
    <property type="entry name" value="PRK05198.1"/>
    <property type="match status" value="1"/>
</dbReference>
<dbReference type="PANTHER" id="PTHR21057">
    <property type="entry name" value="PHOSPHO-2-DEHYDRO-3-DEOXYHEPTONATE ALDOLASE"/>
    <property type="match status" value="1"/>
</dbReference>
<dbReference type="Pfam" id="PF00793">
    <property type="entry name" value="DAHP_synth_1"/>
    <property type="match status" value="1"/>
</dbReference>
<dbReference type="SUPFAM" id="SSF51569">
    <property type="entry name" value="Aldolase"/>
    <property type="match status" value="1"/>
</dbReference>
<protein>
    <recommendedName>
        <fullName evidence="1">2-dehydro-3-deoxyphosphooctonate aldolase</fullName>
        <ecNumber evidence="1">2.5.1.55</ecNumber>
    </recommendedName>
    <alternativeName>
        <fullName evidence="1">3-deoxy-D-manno-octulosonic acid 8-phosphate synthase</fullName>
    </alternativeName>
    <alternativeName>
        <fullName evidence="1">KDO-8-phosphate synthase</fullName>
        <shortName evidence="1">KDO 8-P synthase</shortName>
        <shortName evidence="1">KDOPS</shortName>
    </alternativeName>
    <alternativeName>
        <fullName evidence="1">Phospho-2-dehydro-3-deoxyoctonate aldolase</fullName>
    </alternativeName>
</protein>
<name>KDSA_VARPS</name>
<keyword id="KW-0963">Cytoplasm</keyword>
<keyword id="KW-0448">Lipopolysaccharide biosynthesis</keyword>
<keyword id="KW-0808">Transferase</keyword>
<reference key="1">
    <citation type="journal article" date="2011" name="J. Bacteriol.">
        <title>Complete genome sequence of the metabolically versatile plant growth-promoting endophyte, Variovorax paradoxus S110.</title>
        <authorList>
            <person name="Han J.I."/>
            <person name="Choi H.K."/>
            <person name="Lee S.W."/>
            <person name="Orwin P.M."/>
            <person name="Kim J."/>
            <person name="Laroe S.L."/>
            <person name="Kim T.G."/>
            <person name="O'Neil J."/>
            <person name="Leadbetter J.R."/>
            <person name="Lee S.Y."/>
            <person name="Hur C.G."/>
            <person name="Spain J.C."/>
            <person name="Ovchinnikova G."/>
            <person name="Goodwin L."/>
            <person name="Han C."/>
        </authorList>
    </citation>
    <scope>NUCLEOTIDE SEQUENCE [LARGE SCALE GENOMIC DNA]</scope>
    <source>
        <strain>S110</strain>
    </source>
</reference>